<sequence>MAGEEMNEDYPVEIHESLTALESSLGAVDDMLKTMMAVSRNELLQKLDPLEQAKVDLVSAYTLNSMFWVYLATQGVNPKEHPVKQELERIRVYMNRVKEITDKKKAAKLDRGAASRFVKNALWEPKAKSTPKVANKGKSKH</sequence>
<dbReference type="EMBL" id="AF031426">
    <property type="protein sequence ID" value="AAC53520.1"/>
    <property type="molecule type" value="Genomic_DNA"/>
</dbReference>
<dbReference type="EMBL" id="X95591">
    <property type="protein sequence ID" value="CAA64844.1"/>
    <property type="molecule type" value="mRNA"/>
</dbReference>
<dbReference type="EMBL" id="AK028702">
    <property type="protein sequence ID" value="BAC26075.1"/>
    <property type="molecule type" value="mRNA"/>
</dbReference>
<dbReference type="EMBL" id="AK035169">
    <property type="protein sequence ID" value="BAC28967.1"/>
    <property type="molecule type" value="mRNA"/>
</dbReference>
<dbReference type="EMBL" id="AL603925">
    <property type="status" value="NOT_ANNOTATED_CDS"/>
    <property type="molecule type" value="Genomic_DNA"/>
</dbReference>
<dbReference type="EMBL" id="BC005436">
    <property type="protein sequence ID" value="AAH05436.1"/>
    <property type="molecule type" value="mRNA"/>
</dbReference>
<dbReference type="CCDS" id="CCDS24451.1"/>
<dbReference type="RefSeq" id="NP_001317578.1">
    <property type="nucleotide sequence ID" value="NM_001330649.1"/>
</dbReference>
<dbReference type="RefSeq" id="NP_065583.2">
    <property type="nucleotide sequence ID" value="NM_020558.4"/>
</dbReference>
<dbReference type="SMR" id="O35473"/>
<dbReference type="BioGRID" id="208254">
    <property type="interactions" value="1"/>
</dbReference>
<dbReference type="CORUM" id="O35473"/>
<dbReference type="FunCoup" id="O35473">
    <property type="interactions" value="1813"/>
</dbReference>
<dbReference type="STRING" id="10090.ENSMUSP00000000594"/>
<dbReference type="iPTMnet" id="O35473"/>
<dbReference type="PhosphoSitePlus" id="O35473"/>
<dbReference type="PaxDb" id="10090-ENSMUSP00000000594"/>
<dbReference type="PeptideAtlas" id="O35473"/>
<dbReference type="ProteomicsDB" id="273723"/>
<dbReference type="Pumba" id="O35473"/>
<dbReference type="Antibodypedia" id="30893">
    <property type="antibodies" value="292 antibodies from 32 providers"/>
</dbReference>
<dbReference type="DNASU" id="57316"/>
<dbReference type="Ensembl" id="ENSMUST00000000594.9">
    <property type="protein sequence ID" value="ENSMUSP00000000594.3"/>
    <property type="gene ID" value="ENSMUSG00000000581.9"/>
</dbReference>
<dbReference type="GeneID" id="57316"/>
<dbReference type="KEGG" id="mmu:57316"/>
<dbReference type="UCSC" id="uc007ice.1">
    <property type="organism name" value="mouse"/>
</dbReference>
<dbReference type="AGR" id="MGI:1927354"/>
<dbReference type="CTD" id="10438"/>
<dbReference type="MGI" id="MGI:1927354">
    <property type="gene designation" value="C1d"/>
</dbReference>
<dbReference type="VEuPathDB" id="HostDB:ENSMUSG00000000581"/>
<dbReference type="eggNOG" id="KOG4835">
    <property type="taxonomic scope" value="Eukaryota"/>
</dbReference>
<dbReference type="GeneTree" id="ENSGT00390000015405"/>
<dbReference type="InParanoid" id="O35473"/>
<dbReference type="OMA" id="KLMSMPR"/>
<dbReference type="OrthoDB" id="1421013at2759"/>
<dbReference type="PhylomeDB" id="O35473"/>
<dbReference type="TreeFam" id="TF314651"/>
<dbReference type="Reactome" id="R-MMU-6791226">
    <property type="pathway name" value="Major pathway of rRNA processing in the nucleolus and cytosol"/>
</dbReference>
<dbReference type="BioGRID-ORCS" id="57316">
    <property type="hits" value="23 hits in 78 CRISPR screens"/>
</dbReference>
<dbReference type="ChiTaRS" id="C1d">
    <property type="organism name" value="mouse"/>
</dbReference>
<dbReference type="PRO" id="PR:O35473"/>
<dbReference type="Proteomes" id="UP000000589">
    <property type="component" value="Chromosome 11"/>
</dbReference>
<dbReference type="RNAct" id="O35473">
    <property type="molecule type" value="protein"/>
</dbReference>
<dbReference type="Bgee" id="ENSMUSG00000000581">
    <property type="expression patterns" value="Expressed in pharyngeal arch 2 and 256 other cell types or tissues"/>
</dbReference>
<dbReference type="ExpressionAtlas" id="O35473">
    <property type="expression patterns" value="baseline and differential"/>
</dbReference>
<dbReference type="GO" id="GO:0005737">
    <property type="term" value="C:cytoplasm"/>
    <property type="evidence" value="ECO:0007669"/>
    <property type="project" value="UniProtKB-SubCell"/>
</dbReference>
<dbReference type="GO" id="GO:0005730">
    <property type="term" value="C:nucleolus"/>
    <property type="evidence" value="ECO:0007669"/>
    <property type="project" value="UniProtKB-SubCell"/>
</dbReference>
<dbReference type="GO" id="GO:0005654">
    <property type="term" value="C:nucleoplasm"/>
    <property type="evidence" value="ECO:0007669"/>
    <property type="project" value="Ensembl"/>
</dbReference>
<dbReference type="GO" id="GO:0017053">
    <property type="term" value="C:transcription repressor complex"/>
    <property type="evidence" value="ECO:0000314"/>
    <property type="project" value="MGI"/>
</dbReference>
<dbReference type="GO" id="GO:0003677">
    <property type="term" value="F:DNA binding"/>
    <property type="evidence" value="ECO:0000314"/>
    <property type="project" value="MGI"/>
</dbReference>
<dbReference type="GO" id="GO:0016922">
    <property type="term" value="F:nuclear receptor binding"/>
    <property type="evidence" value="ECO:0000314"/>
    <property type="project" value="MGI"/>
</dbReference>
<dbReference type="GO" id="GO:0003723">
    <property type="term" value="F:RNA binding"/>
    <property type="evidence" value="ECO:0007669"/>
    <property type="project" value="UniProtKB-KW"/>
</dbReference>
<dbReference type="GO" id="GO:0003714">
    <property type="term" value="F:transcription corepressor activity"/>
    <property type="evidence" value="ECO:0000314"/>
    <property type="project" value="MGI"/>
</dbReference>
<dbReference type="GO" id="GO:0006915">
    <property type="term" value="P:apoptotic process"/>
    <property type="evidence" value="ECO:0007669"/>
    <property type="project" value="UniProtKB-KW"/>
</dbReference>
<dbReference type="GO" id="GO:0000460">
    <property type="term" value="P:maturation of 5.8S rRNA"/>
    <property type="evidence" value="ECO:0007669"/>
    <property type="project" value="Ensembl"/>
</dbReference>
<dbReference type="GO" id="GO:0045892">
    <property type="term" value="P:negative regulation of DNA-templated transcription"/>
    <property type="evidence" value="ECO:0000314"/>
    <property type="project" value="MGI"/>
</dbReference>
<dbReference type="InterPro" id="IPR011082">
    <property type="entry name" value="Exosome-assoc_fac/DNA_repair"/>
</dbReference>
<dbReference type="InterPro" id="IPR007146">
    <property type="entry name" value="Sas10/Utp3/C1D"/>
</dbReference>
<dbReference type="PANTHER" id="PTHR15341:SF3">
    <property type="entry name" value="NUCLEAR NUCLEIC ACID-BINDING PROTEIN C1D"/>
    <property type="match status" value="1"/>
</dbReference>
<dbReference type="PANTHER" id="PTHR15341">
    <property type="entry name" value="SUN-COR STEROID HORMONE RECEPTOR CO-REPRESSOR"/>
    <property type="match status" value="1"/>
</dbReference>
<dbReference type="Pfam" id="PF04000">
    <property type="entry name" value="Sas10_Utp3"/>
    <property type="match status" value="1"/>
</dbReference>
<feature type="chain" id="PRO_0000316301" description="Nuclear nucleic acid-binding protein C1D">
    <location>
        <begin position="1"/>
        <end position="141"/>
    </location>
</feature>
<feature type="region of interest" description="Required for transcriptional repression">
    <location>
        <begin position="1"/>
        <end position="100"/>
    </location>
</feature>
<feature type="region of interest" description="Interaction with NR1D1" evidence="4">
    <location>
        <begin position="50"/>
        <end position="100"/>
    </location>
</feature>
<feature type="region of interest" description="Interaction with NCOR1 and NCOR2" evidence="4">
    <location>
        <begin position="100"/>
        <end position="141"/>
    </location>
</feature>
<feature type="cross-link" description="Glycyl lysine isopeptide (Lys-Gly) (interchain with G-Cter in SUMO2)" evidence="2">
    <location>
        <position position="119"/>
    </location>
</feature>
<feature type="cross-link" description="Glycyl lysine isopeptide (Lys-Gly) (interchain with G-Cter in SUMO2)" evidence="2">
    <location>
        <position position="126"/>
    </location>
</feature>
<feature type="cross-link" description="Glycyl lysine isopeptide (Lys-Gly) (interchain with G-Cter in SUMO2)" evidence="2">
    <location>
        <position position="132"/>
    </location>
</feature>
<feature type="sequence conflict" description="In Ref. 2; CAA64844." evidence="6" ref="2">
    <original>N</original>
    <variation>K</variation>
    <location>
        <position position="120"/>
    </location>
</feature>
<feature type="sequence conflict" description="In Ref. 2; CAA64844." evidence="6" ref="2">
    <original>A</original>
    <variation>R</variation>
    <location>
        <position position="127"/>
    </location>
</feature>
<proteinExistence type="evidence at protein level"/>
<gene>
    <name type="primary">C1d</name>
    <name type="synonym">Suncor</name>
</gene>
<name>C1D_MOUSE</name>
<evidence type="ECO:0000250" key="1"/>
<evidence type="ECO:0000250" key="2">
    <source>
        <dbReference type="UniProtKB" id="Q13901"/>
    </source>
</evidence>
<evidence type="ECO:0000269" key="3">
    <source>
    </source>
</evidence>
<evidence type="ECO:0000269" key="4">
    <source>
    </source>
</evidence>
<evidence type="ECO:0000269" key="5">
    <source>
    </source>
</evidence>
<evidence type="ECO:0000305" key="6"/>
<reference key="1">
    <citation type="journal article" date="1997" name="Proc. Natl. Acad. Sci. U.S.A.">
        <title>Cloning and characterization of a corepressor and potential component of the nuclear hormone receptor repression complex.</title>
        <authorList>
            <person name="Zamir I."/>
            <person name="Dawson J."/>
            <person name="Lavinsky R.M."/>
            <person name="Glass C.K."/>
            <person name="Rosenfeld M.G."/>
            <person name="Lazar M.A."/>
        </authorList>
    </citation>
    <scope>NUCLEOTIDE SEQUENCE [GENOMIC DNA]</scope>
    <scope>FUNCTION</scope>
    <scope>INDUCTION</scope>
    <scope>SUBCELLULAR LOCATION</scope>
    <scope>TISSUE SPECIFICITY</scope>
    <scope>INTERACTION WITH NR1D1; THRA; THRB; NCOR1 AND NCOR2</scope>
</reference>
<reference key="2">
    <citation type="journal article" date="1998" name="Nucleic Acids Res.">
        <title>cDNA cloning, recombinant expression and characterization of polypeptides with exceptional DNA affinity.</title>
        <authorList>
            <person name="Nehls P."/>
            <person name="Keck T."/>
            <person name="Greferath R."/>
            <person name="Spiess E."/>
            <person name="Glaser T."/>
            <person name="Rothbarth K."/>
            <person name="Stammer H."/>
            <person name="Werner D."/>
        </authorList>
    </citation>
    <scope>NUCLEOTIDE SEQUENCE [MRNA]</scope>
    <scope>SUBUNIT</scope>
    <source>
        <strain>NMRI</strain>
        <tissue>Ascitic tumor</tissue>
    </source>
</reference>
<reference key="3">
    <citation type="journal article" date="2005" name="Science">
        <title>The transcriptional landscape of the mammalian genome.</title>
        <authorList>
            <person name="Carninci P."/>
            <person name="Kasukawa T."/>
            <person name="Katayama S."/>
            <person name="Gough J."/>
            <person name="Frith M.C."/>
            <person name="Maeda N."/>
            <person name="Oyama R."/>
            <person name="Ravasi T."/>
            <person name="Lenhard B."/>
            <person name="Wells C."/>
            <person name="Kodzius R."/>
            <person name="Shimokawa K."/>
            <person name="Bajic V.B."/>
            <person name="Brenner S.E."/>
            <person name="Batalov S."/>
            <person name="Forrest A.R."/>
            <person name="Zavolan M."/>
            <person name="Davis M.J."/>
            <person name="Wilming L.G."/>
            <person name="Aidinis V."/>
            <person name="Allen J.E."/>
            <person name="Ambesi-Impiombato A."/>
            <person name="Apweiler R."/>
            <person name="Aturaliya R.N."/>
            <person name="Bailey T.L."/>
            <person name="Bansal M."/>
            <person name="Baxter L."/>
            <person name="Beisel K.W."/>
            <person name="Bersano T."/>
            <person name="Bono H."/>
            <person name="Chalk A.M."/>
            <person name="Chiu K.P."/>
            <person name="Choudhary V."/>
            <person name="Christoffels A."/>
            <person name="Clutterbuck D.R."/>
            <person name="Crowe M.L."/>
            <person name="Dalla E."/>
            <person name="Dalrymple B.P."/>
            <person name="de Bono B."/>
            <person name="Della Gatta G."/>
            <person name="di Bernardo D."/>
            <person name="Down T."/>
            <person name="Engstrom P."/>
            <person name="Fagiolini M."/>
            <person name="Faulkner G."/>
            <person name="Fletcher C.F."/>
            <person name="Fukushima T."/>
            <person name="Furuno M."/>
            <person name="Futaki S."/>
            <person name="Gariboldi M."/>
            <person name="Georgii-Hemming P."/>
            <person name="Gingeras T.R."/>
            <person name="Gojobori T."/>
            <person name="Green R.E."/>
            <person name="Gustincich S."/>
            <person name="Harbers M."/>
            <person name="Hayashi Y."/>
            <person name="Hensch T.K."/>
            <person name="Hirokawa N."/>
            <person name="Hill D."/>
            <person name="Huminiecki L."/>
            <person name="Iacono M."/>
            <person name="Ikeo K."/>
            <person name="Iwama A."/>
            <person name="Ishikawa T."/>
            <person name="Jakt M."/>
            <person name="Kanapin A."/>
            <person name="Katoh M."/>
            <person name="Kawasawa Y."/>
            <person name="Kelso J."/>
            <person name="Kitamura H."/>
            <person name="Kitano H."/>
            <person name="Kollias G."/>
            <person name="Krishnan S.P."/>
            <person name="Kruger A."/>
            <person name="Kummerfeld S.K."/>
            <person name="Kurochkin I.V."/>
            <person name="Lareau L.F."/>
            <person name="Lazarevic D."/>
            <person name="Lipovich L."/>
            <person name="Liu J."/>
            <person name="Liuni S."/>
            <person name="McWilliam S."/>
            <person name="Madan Babu M."/>
            <person name="Madera M."/>
            <person name="Marchionni L."/>
            <person name="Matsuda H."/>
            <person name="Matsuzawa S."/>
            <person name="Miki H."/>
            <person name="Mignone F."/>
            <person name="Miyake S."/>
            <person name="Morris K."/>
            <person name="Mottagui-Tabar S."/>
            <person name="Mulder N."/>
            <person name="Nakano N."/>
            <person name="Nakauchi H."/>
            <person name="Ng P."/>
            <person name="Nilsson R."/>
            <person name="Nishiguchi S."/>
            <person name="Nishikawa S."/>
            <person name="Nori F."/>
            <person name="Ohara O."/>
            <person name="Okazaki Y."/>
            <person name="Orlando V."/>
            <person name="Pang K.C."/>
            <person name="Pavan W.J."/>
            <person name="Pavesi G."/>
            <person name="Pesole G."/>
            <person name="Petrovsky N."/>
            <person name="Piazza S."/>
            <person name="Reed J."/>
            <person name="Reid J.F."/>
            <person name="Ring B.Z."/>
            <person name="Ringwald M."/>
            <person name="Rost B."/>
            <person name="Ruan Y."/>
            <person name="Salzberg S.L."/>
            <person name="Sandelin A."/>
            <person name="Schneider C."/>
            <person name="Schoenbach C."/>
            <person name="Sekiguchi K."/>
            <person name="Semple C.A."/>
            <person name="Seno S."/>
            <person name="Sessa L."/>
            <person name="Sheng Y."/>
            <person name="Shibata Y."/>
            <person name="Shimada H."/>
            <person name="Shimada K."/>
            <person name="Silva D."/>
            <person name="Sinclair B."/>
            <person name="Sperling S."/>
            <person name="Stupka E."/>
            <person name="Sugiura K."/>
            <person name="Sultana R."/>
            <person name="Takenaka Y."/>
            <person name="Taki K."/>
            <person name="Tammoja K."/>
            <person name="Tan S.L."/>
            <person name="Tang S."/>
            <person name="Taylor M.S."/>
            <person name="Tegner J."/>
            <person name="Teichmann S.A."/>
            <person name="Ueda H.R."/>
            <person name="van Nimwegen E."/>
            <person name="Verardo R."/>
            <person name="Wei C.L."/>
            <person name="Yagi K."/>
            <person name="Yamanishi H."/>
            <person name="Zabarovsky E."/>
            <person name="Zhu S."/>
            <person name="Zimmer A."/>
            <person name="Hide W."/>
            <person name="Bult C."/>
            <person name="Grimmond S.M."/>
            <person name="Teasdale R.D."/>
            <person name="Liu E.T."/>
            <person name="Brusic V."/>
            <person name="Quackenbush J."/>
            <person name="Wahlestedt C."/>
            <person name="Mattick J.S."/>
            <person name="Hume D.A."/>
            <person name="Kai C."/>
            <person name="Sasaki D."/>
            <person name="Tomaru Y."/>
            <person name="Fukuda S."/>
            <person name="Kanamori-Katayama M."/>
            <person name="Suzuki M."/>
            <person name="Aoki J."/>
            <person name="Arakawa T."/>
            <person name="Iida J."/>
            <person name="Imamura K."/>
            <person name="Itoh M."/>
            <person name="Kato T."/>
            <person name="Kawaji H."/>
            <person name="Kawagashira N."/>
            <person name="Kawashima T."/>
            <person name="Kojima M."/>
            <person name="Kondo S."/>
            <person name="Konno H."/>
            <person name="Nakano K."/>
            <person name="Ninomiya N."/>
            <person name="Nishio T."/>
            <person name="Okada M."/>
            <person name="Plessy C."/>
            <person name="Shibata K."/>
            <person name="Shiraki T."/>
            <person name="Suzuki S."/>
            <person name="Tagami M."/>
            <person name="Waki K."/>
            <person name="Watahiki A."/>
            <person name="Okamura-Oho Y."/>
            <person name="Suzuki H."/>
            <person name="Kawai J."/>
            <person name="Hayashizaki Y."/>
        </authorList>
    </citation>
    <scope>NUCLEOTIDE SEQUENCE [LARGE SCALE MRNA]</scope>
    <source>
        <strain>C57BL/6J</strain>
        <tissue>Skin</tissue>
    </source>
</reference>
<reference key="4">
    <citation type="journal article" date="2009" name="PLoS Biol.">
        <title>Lineage-specific biology revealed by a finished genome assembly of the mouse.</title>
        <authorList>
            <person name="Church D.M."/>
            <person name="Goodstadt L."/>
            <person name="Hillier L.W."/>
            <person name="Zody M.C."/>
            <person name="Goldstein S."/>
            <person name="She X."/>
            <person name="Bult C.J."/>
            <person name="Agarwala R."/>
            <person name="Cherry J.L."/>
            <person name="DiCuccio M."/>
            <person name="Hlavina W."/>
            <person name="Kapustin Y."/>
            <person name="Meric P."/>
            <person name="Maglott D."/>
            <person name="Birtle Z."/>
            <person name="Marques A.C."/>
            <person name="Graves T."/>
            <person name="Zhou S."/>
            <person name="Teague B."/>
            <person name="Potamousis K."/>
            <person name="Churas C."/>
            <person name="Place M."/>
            <person name="Herschleb J."/>
            <person name="Runnheim R."/>
            <person name="Forrest D."/>
            <person name="Amos-Landgraf J."/>
            <person name="Schwartz D.C."/>
            <person name="Cheng Z."/>
            <person name="Lindblad-Toh K."/>
            <person name="Eichler E.E."/>
            <person name="Ponting C.P."/>
        </authorList>
    </citation>
    <scope>NUCLEOTIDE SEQUENCE [LARGE SCALE GENOMIC DNA]</scope>
    <source>
        <strain>C57BL/6J</strain>
    </source>
</reference>
<reference key="5">
    <citation type="journal article" date="2004" name="Genome Res.">
        <title>The status, quality, and expansion of the NIH full-length cDNA project: the Mammalian Gene Collection (MGC).</title>
        <authorList>
            <consortium name="The MGC Project Team"/>
        </authorList>
    </citation>
    <scope>NUCLEOTIDE SEQUENCE [LARGE SCALE MRNA]</scope>
    <source>
        <strain>Czech II</strain>
        <tissue>Mammary tumor</tissue>
    </source>
</reference>
<reference key="6">
    <citation type="journal article" date="1999" name="J. Cell Sci.">
        <title>Induction of apoptosis by overexpression of the DNA-binding and DNA-PK-activating protein C1D.</title>
        <authorList>
            <person name="Rothbarth K."/>
            <person name="Spiess E."/>
            <person name="Juodka B."/>
            <person name="Yavuzer U."/>
            <person name="Nehls P."/>
            <person name="Stammer H."/>
            <person name="Werner D."/>
        </authorList>
    </citation>
    <scope>FUNCTION</scope>
</reference>
<accession>O35473</accession>
<accession>Q5SWJ6</accession>
<accession>Q61368</accession>
<organism>
    <name type="scientific">Mus musculus</name>
    <name type="common">Mouse</name>
    <dbReference type="NCBI Taxonomy" id="10090"/>
    <lineage>
        <taxon>Eukaryota</taxon>
        <taxon>Metazoa</taxon>
        <taxon>Chordata</taxon>
        <taxon>Craniata</taxon>
        <taxon>Vertebrata</taxon>
        <taxon>Euteleostomi</taxon>
        <taxon>Mammalia</taxon>
        <taxon>Eutheria</taxon>
        <taxon>Euarchontoglires</taxon>
        <taxon>Glires</taxon>
        <taxon>Rodentia</taxon>
        <taxon>Myomorpha</taxon>
        <taxon>Muroidea</taxon>
        <taxon>Muridae</taxon>
        <taxon>Murinae</taxon>
        <taxon>Mus</taxon>
        <taxon>Mus</taxon>
    </lineage>
</organism>
<comment type="function">
    <text evidence="2 3 4">Plays a role in the recruitment of the RNA exosome complex to pre-rRNA to mediate the 3'-5' end processing of the 5.8S rRNA; this function may include MPHOSPH6. Can activate PRKDC not only in the presence of linear DNA but also in the presence of supercoiled DNA. Can induce apoptosis in a p53/TP53 dependent manner. May regulate the TRAX/TSN complex formation. Potentiates transcriptional repression by NR1D1 and THRB (By similarity).</text>
</comment>
<comment type="subunit">
    <text evidence="2 4 5">Monomer and homodimer. Interacts with NR1D1, THRA, THRB, NCOR1 and NCOR2. Associates with the RNA exosome complex (By similarity). Interacts with EXOSC10; the interaction probably mediates the association with the nuclear form of the RNA exosome. The homodimeric form interacts with TSNAX following gamma-radiation. Interacts with RAC3.</text>
</comment>
<comment type="subcellular location">
    <subcellularLocation>
        <location evidence="4">Nucleus</location>
    </subcellularLocation>
    <subcellularLocation>
        <location evidence="2">Cytoplasm</location>
    </subcellularLocation>
    <subcellularLocation>
        <location evidence="2">Nucleus</location>
        <location evidence="2">Nucleolus</location>
    </subcellularLocation>
    <text evidence="2">EXOSC10 is required for nucleolar localization. Colocalizes with TSNAX in the nucleus.</text>
</comment>
<comment type="tissue specificity">
    <text evidence="4">Kidney, heart, brain, spleen, lung, testis, liver and small intestine.</text>
</comment>
<comment type="induction">
    <text evidence="4">Up-regulated during adipocyte and myogenic differentiation.</text>
</comment>
<comment type="PTM">
    <text evidence="1">Phosphorylated by PRKDC.</text>
</comment>
<comment type="similarity">
    <text evidence="6">Belongs to the C1D family.</text>
</comment>
<protein>
    <recommendedName>
        <fullName>Nuclear nucleic acid-binding protein C1D</fullName>
        <shortName>mC1D</shortName>
    </recommendedName>
    <alternativeName>
        <fullName>Small unique nuclear receptor corepressor</fullName>
        <shortName>Sun-CoR</shortName>
        <shortName>SunCoR</shortName>
    </alternativeName>
</protein>
<keyword id="KW-0053">Apoptosis</keyword>
<keyword id="KW-0963">Cytoplasm</keyword>
<keyword id="KW-0238">DNA-binding</keyword>
<keyword id="KW-1017">Isopeptide bond</keyword>
<keyword id="KW-0539">Nucleus</keyword>
<keyword id="KW-0597">Phosphoprotein</keyword>
<keyword id="KW-1185">Reference proteome</keyword>
<keyword id="KW-0678">Repressor</keyword>
<keyword id="KW-0694">RNA-binding</keyword>
<keyword id="KW-0698">rRNA processing</keyword>
<keyword id="KW-0804">Transcription</keyword>
<keyword id="KW-0805">Transcription regulation</keyword>
<keyword id="KW-0832">Ubl conjugation</keyword>